<protein>
    <recommendedName>
        <fullName>Homeobox protein Hox-B5</fullName>
    </recommendedName>
    <alternativeName>
        <fullName>Homeobox protein Hox-2.1</fullName>
        <shortName>Ghox-2.1</shortName>
    </alternativeName>
</protein>
<gene>
    <name type="primary">HOXB5</name>
    <name type="synonym">GHOX-2.1</name>
</gene>
<accession>P14838</accession>
<sequence length="82" mass="9877">DMTGPDGKRARTAYTRYQTLELEKEFHFNRYLTRRRRIEIAHALCLSERQIKIWFQNRRMKWKKDNKLKSMSLASAGSAFQP</sequence>
<name>HXB5_CHICK</name>
<dbReference type="EMBL" id="X16846">
    <property type="protein sequence ID" value="CAA34743.1"/>
    <property type="molecule type" value="Genomic_DNA"/>
</dbReference>
<dbReference type="PIR" id="S08302">
    <property type="entry name" value="S08302"/>
</dbReference>
<dbReference type="SMR" id="P14838"/>
<dbReference type="FunCoup" id="P14838">
    <property type="interactions" value="199"/>
</dbReference>
<dbReference type="STRING" id="9031.ENSGALP00000048616"/>
<dbReference type="PaxDb" id="9031-ENSGALP00000042679"/>
<dbReference type="VEuPathDB" id="HostDB:geneid_425096"/>
<dbReference type="eggNOG" id="KOG0489">
    <property type="taxonomic scope" value="Eukaryota"/>
</dbReference>
<dbReference type="HOGENOM" id="CLU_061398_2_1_1"/>
<dbReference type="InParanoid" id="P14838"/>
<dbReference type="PhylomeDB" id="P14838"/>
<dbReference type="Proteomes" id="UP000000539">
    <property type="component" value="Unassembled WGS sequence"/>
</dbReference>
<dbReference type="GO" id="GO:0005634">
    <property type="term" value="C:nucleus"/>
    <property type="evidence" value="ECO:0007669"/>
    <property type="project" value="UniProtKB-SubCell"/>
</dbReference>
<dbReference type="GO" id="GO:0003677">
    <property type="term" value="F:DNA binding"/>
    <property type="evidence" value="ECO:0007669"/>
    <property type="project" value="UniProtKB-KW"/>
</dbReference>
<dbReference type="GO" id="GO:0000981">
    <property type="term" value="F:DNA-binding transcription factor activity, RNA polymerase II-specific"/>
    <property type="evidence" value="ECO:0007669"/>
    <property type="project" value="InterPro"/>
</dbReference>
<dbReference type="CDD" id="cd00086">
    <property type="entry name" value="homeodomain"/>
    <property type="match status" value="1"/>
</dbReference>
<dbReference type="FunFam" id="1.10.10.60:FF:000055">
    <property type="entry name" value="Homeobox protein Hox-A5"/>
    <property type="match status" value="1"/>
</dbReference>
<dbReference type="Gene3D" id="1.10.10.60">
    <property type="entry name" value="Homeodomain-like"/>
    <property type="match status" value="1"/>
</dbReference>
<dbReference type="InterPro" id="IPR050296">
    <property type="entry name" value="Antp_homeobox"/>
</dbReference>
<dbReference type="InterPro" id="IPR001356">
    <property type="entry name" value="HD"/>
</dbReference>
<dbReference type="InterPro" id="IPR020479">
    <property type="entry name" value="HD_metazoa"/>
</dbReference>
<dbReference type="InterPro" id="IPR017970">
    <property type="entry name" value="Homeobox_CS"/>
</dbReference>
<dbReference type="InterPro" id="IPR009057">
    <property type="entry name" value="Homeodomain-like_sf"/>
</dbReference>
<dbReference type="PANTHER" id="PTHR45659">
    <property type="entry name" value="HOMEOBOX PROTEIN HOX"/>
    <property type="match status" value="1"/>
</dbReference>
<dbReference type="PANTHER" id="PTHR45659:SF2">
    <property type="entry name" value="HOMEOBOX PROTEIN HOX-B5"/>
    <property type="match status" value="1"/>
</dbReference>
<dbReference type="Pfam" id="PF00046">
    <property type="entry name" value="Homeodomain"/>
    <property type="match status" value="1"/>
</dbReference>
<dbReference type="PRINTS" id="PR00024">
    <property type="entry name" value="HOMEOBOX"/>
</dbReference>
<dbReference type="SMART" id="SM00389">
    <property type="entry name" value="HOX"/>
    <property type="match status" value="1"/>
</dbReference>
<dbReference type="SUPFAM" id="SSF46689">
    <property type="entry name" value="Homeodomain-like"/>
    <property type="match status" value="1"/>
</dbReference>
<dbReference type="PROSITE" id="PS00027">
    <property type="entry name" value="HOMEOBOX_1"/>
    <property type="match status" value="1"/>
</dbReference>
<dbReference type="PROSITE" id="PS50071">
    <property type="entry name" value="HOMEOBOX_2"/>
    <property type="match status" value="1"/>
</dbReference>
<keyword id="KW-0217">Developmental protein</keyword>
<keyword id="KW-0238">DNA-binding</keyword>
<keyword id="KW-0371">Homeobox</keyword>
<keyword id="KW-0539">Nucleus</keyword>
<keyword id="KW-1185">Reference proteome</keyword>
<keyword id="KW-0804">Transcription</keyword>
<keyword id="KW-0805">Transcription regulation</keyword>
<proteinExistence type="inferred from homology"/>
<comment type="function">
    <text>Sequence-specific transcription factor which is part of a developmental regulatory system that provides cells with specific positional identities on the anterior-posterior axis.</text>
</comment>
<comment type="subcellular location">
    <subcellularLocation>
        <location>Nucleus</location>
    </subcellularLocation>
</comment>
<comment type="similarity">
    <text evidence="2">Belongs to the Antp homeobox family.</text>
</comment>
<feature type="chain" id="PRO_0000200131" description="Homeobox protein Hox-B5">
    <location>
        <begin position="1" status="less than"/>
        <end position="82"/>
    </location>
</feature>
<feature type="DNA-binding region" description="Homeobox" evidence="1">
    <location>
        <begin position="7"/>
        <end position="66"/>
    </location>
</feature>
<feature type="non-terminal residue">
    <location>
        <position position="1"/>
    </location>
</feature>
<reference key="1">
    <citation type="journal article" date="1989" name="Development">
        <title>Expression pattern of homeobox-containing genes during chick embryogenesis.</title>
        <authorList>
            <person name="Wedden S.E."/>
            <person name="Pang K."/>
            <person name="Eichele G."/>
        </authorList>
    </citation>
    <scope>NUCLEOTIDE SEQUENCE [GENOMIC DNA]</scope>
    <source>
        <tissue>Erythrocyte</tissue>
    </source>
</reference>
<evidence type="ECO:0000255" key="1">
    <source>
        <dbReference type="PROSITE-ProRule" id="PRU00108"/>
    </source>
</evidence>
<evidence type="ECO:0000305" key="2"/>
<organism>
    <name type="scientific">Gallus gallus</name>
    <name type="common">Chicken</name>
    <dbReference type="NCBI Taxonomy" id="9031"/>
    <lineage>
        <taxon>Eukaryota</taxon>
        <taxon>Metazoa</taxon>
        <taxon>Chordata</taxon>
        <taxon>Craniata</taxon>
        <taxon>Vertebrata</taxon>
        <taxon>Euteleostomi</taxon>
        <taxon>Archelosauria</taxon>
        <taxon>Archosauria</taxon>
        <taxon>Dinosauria</taxon>
        <taxon>Saurischia</taxon>
        <taxon>Theropoda</taxon>
        <taxon>Coelurosauria</taxon>
        <taxon>Aves</taxon>
        <taxon>Neognathae</taxon>
        <taxon>Galloanserae</taxon>
        <taxon>Galliformes</taxon>
        <taxon>Phasianidae</taxon>
        <taxon>Phasianinae</taxon>
        <taxon>Gallus</taxon>
    </lineage>
</organism>